<name>DEOD_LIMRD</name>
<evidence type="ECO:0000250" key="1">
    <source>
        <dbReference type="UniProtKB" id="P50389"/>
    </source>
</evidence>
<evidence type="ECO:0000255" key="2">
    <source>
        <dbReference type="HAMAP-Rule" id="MF_01627"/>
    </source>
</evidence>
<gene>
    <name evidence="2" type="primary">deoD</name>
    <name type="ordered locus">Lreu_0114</name>
</gene>
<sequence>MSTHINAKMGDYADTVLLPGDPLRAKYIAENFLENVKQVNSVRNAFGYTGEYKGHRISVQGSGMGIPSMSIYINELVREFGVKTIIRVGSCGGIAPDVHVRDVLLAQGSSTDSAVTVNTFGPGFHYAPLADFKLLDTAYHVAGKLGIETKVGDIFAADRFYNDELDMEKLRDYGILGTEMESAGLYLLAAKLHFRALSVLTVSDLIFGDEKATAEERERTFNDMINISLETAIAGK</sequence>
<proteinExistence type="inferred from homology"/>
<feature type="chain" id="PRO_1000186208" description="Purine nucleoside phosphorylase DeoD-type">
    <location>
        <begin position="1"/>
        <end position="236"/>
    </location>
</feature>
<feature type="active site" description="Proton donor" evidence="2">
    <location>
        <position position="204"/>
    </location>
</feature>
<feature type="binding site" evidence="1">
    <location>
        <position position="4"/>
    </location>
    <ligand>
        <name>a purine D-ribonucleoside</name>
        <dbReference type="ChEBI" id="CHEBI:142355"/>
        <note>ligand shared between dimeric partners</note>
    </ligand>
</feature>
<feature type="binding site" description="in other chain" evidence="1">
    <location>
        <position position="20"/>
    </location>
    <ligand>
        <name>phosphate</name>
        <dbReference type="ChEBI" id="CHEBI:43474"/>
        <note>ligand shared between dimeric partners</note>
    </ligand>
</feature>
<feature type="binding site" description="in other chain" evidence="1">
    <location>
        <position position="24"/>
    </location>
    <ligand>
        <name>phosphate</name>
        <dbReference type="ChEBI" id="CHEBI:43474"/>
        <note>ligand shared between dimeric partners</note>
    </ligand>
</feature>
<feature type="binding site" evidence="1">
    <location>
        <position position="43"/>
    </location>
    <ligand>
        <name>phosphate</name>
        <dbReference type="ChEBI" id="CHEBI:43474"/>
        <note>ligand shared between dimeric partners</note>
    </ligand>
</feature>
<feature type="binding site" description="in other chain" evidence="1">
    <location>
        <begin position="87"/>
        <end position="90"/>
    </location>
    <ligand>
        <name>phosphate</name>
        <dbReference type="ChEBI" id="CHEBI:43474"/>
        <note>ligand shared between dimeric partners</note>
    </ligand>
</feature>
<feature type="binding site" description="in other chain" evidence="1">
    <location>
        <begin position="179"/>
        <end position="181"/>
    </location>
    <ligand>
        <name>a purine D-ribonucleoside</name>
        <dbReference type="ChEBI" id="CHEBI:142355"/>
        <note>ligand shared between dimeric partners</note>
    </ligand>
</feature>
<feature type="binding site" description="in other chain" evidence="1">
    <location>
        <begin position="203"/>
        <end position="204"/>
    </location>
    <ligand>
        <name>a purine D-ribonucleoside</name>
        <dbReference type="ChEBI" id="CHEBI:142355"/>
        <note>ligand shared between dimeric partners</note>
    </ligand>
</feature>
<feature type="site" description="Important for catalytic activity" evidence="2">
    <location>
        <position position="217"/>
    </location>
</feature>
<reference key="1">
    <citation type="journal article" date="2011" name="PLoS Genet.">
        <title>The evolution of host specialization in the vertebrate gut symbiont Lactobacillus reuteri.</title>
        <authorList>
            <person name="Frese S.A."/>
            <person name="Benson A.K."/>
            <person name="Tannock G.W."/>
            <person name="Loach D.M."/>
            <person name="Kim J."/>
            <person name="Zhang M."/>
            <person name="Oh P.L."/>
            <person name="Heng N.C."/>
            <person name="Patil P.B."/>
            <person name="Juge N."/>
            <person name="Mackenzie D.A."/>
            <person name="Pearson B.M."/>
            <person name="Lapidus A."/>
            <person name="Dalin E."/>
            <person name="Tice H."/>
            <person name="Goltsman E."/>
            <person name="Land M."/>
            <person name="Hauser L."/>
            <person name="Ivanova N."/>
            <person name="Kyrpides N.C."/>
            <person name="Walter J."/>
        </authorList>
    </citation>
    <scope>NUCLEOTIDE SEQUENCE [LARGE SCALE GENOMIC DNA]</scope>
    <source>
        <strain>DSM 20016</strain>
    </source>
</reference>
<keyword id="KW-0328">Glycosyltransferase</keyword>
<keyword id="KW-1185">Reference proteome</keyword>
<keyword id="KW-0808">Transferase</keyword>
<protein>
    <recommendedName>
        <fullName evidence="2">Purine nucleoside phosphorylase DeoD-type</fullName>
        <shortName evidence="2">PNP</shortName>
        <ecNumber evidence="2">2.4.2.1</ecNumber>
    </recommendedName>
</protein>
<accession>A5VHR2</accession>
<dbReference type="EC" id="2.4.2.1" evidence="2"/>
<dbReference type="EMBL" id="CP000705">
    <property type="protein sequence ID" value="ABQ82386.1"/>
    <property type="molecule type" value="Genomic_DNA"/>
</dbReference>
<dbReference type="RefSeq" id="WP_003665392.1">
    <property type="nucleotide sequence ID" value="NZ_AZDD01000012.1"/>
</dbReference>
<dbReference type="SMR" id="A5VHR2"/>
<dbReference type="STRING" id="557436.Lreu_0114"/>
<dbReference type="GeneID" id="77190316"/>
<dbReference type="KEGG" id="lre:Lreu_0114"/>
<dbReference type="PATRIC" id="fig|557436.17.peg.289"/>
<dbReference type="eggNOG" id="COG0813">
    <property type="taxonomic scope" value="Bacteria"/>
</dbReference>
<dbReference type="HOGENOM" id="CLU_068457_2_0_9"/>
<dbReference type="OMA" id="PQCLLCG"/>
<dbReference type="Proteomes" id="UP000001991">
    <property type="component" value="Chromosome"/>
</dbReference>
<dbReference type="GO" id="GO:0005829">
    <property type="term" value="C:cytosol"/>
    <property type="evidence" value="ECO:0007669"/>
    <property type="project" value="TreeGrafter"/>
</dbReference>
<dbReference type="GO" id="GO:0004731">
    <property type="term" value="F:purine-nucleoside phosphorylase activity"/>
    <property type="evidence" value="ECO:0007669"/>
    <property type="project" value="UniProtKB-UniRule"/>
</dbReference>
<dbReference type="GO" id="GO:0006152">
    <property type="term" value="P:purine nucleoside catabolic process"/>
    <property type="evidence" value="ECO:0007669"/>
    <property type="project" value="TreeGrafter"/>
</dbReference>
<dbReference type="CDD" id="cd09006">
    <property type="entry name" value="PNP_EcPNPI-like"/>
    <property type="match status" value="1"/>
</dbReference>
<dbReference type="Gene3D" id="3.40.50.1580">
    <property type="entry name" value="Nucleoside phosphorylase domain"/>
    <property type="match status" value="1"/>
</dbReference>
<dbReference type="HAMAP" id="MF_01627">
    <property type="entry name" value="Pur_nucleosid_phosp"/>
    <property type="match status" value="1"/>
</dbReference>
<dbReference type="InterPro" id="IPR004402">
    <property type="entry name" value="DeoD-type"/>
</dbReference>
<dbReference type="InterPro" id="IPR018016">
    <property type="entry name" value="Nucleoside_phosphorylase_CS"/>
</dbReference>
<dbReference type="InterPro" id="IPR000845">
    <property type="entry name" value="Nucleoside_phosphorylase_d"/>
</dbReference>
<dbReference type="InterPro" id="IPR035994">
    <property type="entry name" value="Nucleoside_phosphorylase_sf"/>
</dbReference>
<dbReference type="NCBIfam" id="TIGR00107">
    <property type="entry name" value="deoD"/>
    <property type="match status" value="1"/>
</dbReference>
<dbReference type="NCBIfam" id="NF004489">
    <property type="entry name" value="PRK05819.1"/>
    <property type="match status" value="1"/>
</dbReference>
<dbReference type="PANTHER" id="PTHR43691:SF11">
    <property type="entry name" value="FI09636P-RELATED"/>
    <property type="match status" value="1"/>
</dbReference>
<dbReference type="PANTHER" id="PTHR43691">
    <property type="entry name" value="URIDINE PHOSPHORYLASE"/>
    <property type="match status" value="1"/>
</dbReference>
<dbReference type="Pfam" id="PF01048">
    <property type="entry name" value="PNP_UDP_1"/>
    <property type="match status" value="1"/>
</dbReference>
<dbReference type="SUPFAM" id="SSF53167">
    <property type="entry name" value="Purine and uridine phosphorylases"/>
    <property type="match status" value="1"/>
</dbReference>
<dbReference type="PROSITE" id="PS01232">
    <property type="entry name" value="PNP_UDP_1"/>
    <property type="match status" value="1"/>
</dbReference>
<organism>
    <name type="scientific">Limosilactobacillus reuteri (strain DSM 20016)</name>
    <name type="common">Lactobacillus reuteri</name>
    <dbReference type="NCBI Taxonomy" id="557436"/>
    <lineage>
        <taxon>Bacteria</taxon>
        <taxon>Bacillati</taxon>
        <taxon>Bacillota</taxon>
        <taxon>Bacilli</taxon>
        <taxon>Lactobacillales</taxon>
        <taxon>Lactobacillaceae</taxon>
        <taxon>Limosilactobacillus</taxon>
    </lineage>
</organism>
<comment type="function">
    <text evidence="2">Catalyzes the reversible phosphorolytic breakdown of the N-glycosidic bond in the beta-(deoxy)ribonucleoside molecules, with the formation of the corresponding free purine bases and pentose-1-phosphate.</text>
</comment>
<comment type="catalytic activity">
    <reaction evidence="2">
        <text>a purine D-ribonucleoside + phosphate = a purine nucleobase + alpha-D-ribose 1-phosphate</text>
        <dbReference type="Rhea" id="RHEA:19805"/>
        <dbReference type="ChEBI" id="CHEBI:26386"/>
        <dbReference type="ChEBI" id="CHEBI:43474"/>
        <dbReference type="ChEBI" id="CHEBI:57720"/>
        <dbReference type="ChEBI" id="CHEBI:142355"/>
        <dbReference type="EC" id="2.4.2.1"/>
    </reaction>
</comment>
<comment type="catalytic activity">
    <reaction evidence="2">
        <text>a purine 2'-deoxy-D-ribonucleoside + phosphate = a purine nucleobase + 2-deoxy-alpha-D-ribose 1-phosphate</text>
        <dbReference type="Rhea" id="RHEA:36431"/>
        <dbReference type="ChEBI" id="CHEBI:26386"/>
        <dbReference type="ChEBI" id="CHEBI:43474"/>
        <dbReference type="ChEBI" id="CHEBI:57259"/>
        <dbReference type="ChEBI" id="CHEBI:142361"/>
        <dbReference type="EC" id="2.4.2.1"/>
    </reaction>
</comment>
<comment type="subunit">
    <text evidence="2">Homohexamer; trimer of homodimers.</text>
</comment>
<comment type="similarity">
    <text evidence="2">Belongs to the PNP/UDP phosphorylase family.</text>
</comment>